<accession>A9BIM4</accession>
<sequence length="163" mass="18414">MVILGIDPGYGRIGYGVLEKKGNMFNLIDYGVIYTSKEDELPKRLLNIDEQLRNLIETYKPDESAVEKLYFFKNVATAIQVGEARGVILLCLEKENIPIYEYTPFQIKQAVTGYGRAEKGQIQRTLKLLLKLEKTPTPDDAADALATAFCHGNFRRSFKNAGY</sequence>
<keyword id="KW-0963">Cytoplasm</keyword>
<keyword id="KW-0227">DNA damage</keyword>
<keyword id="KW-0233">DNA recombination</keyword>
<keyword id="KW-0234">DNA repair</keyword>
<keyword id="KW-0238">DNA-binding</keyword>
<keyword id="KW-0255">Endonuclease</keyword>
<keyword id="KW-0378">Hydrolase</keyword>
<keyword id="KW-0460">Magnesium</keyword>
<keyword id="KW-0479">Metal-binding</keyword>
<keyword id="KW-0540">Nuclease</keyword>
<reference key="1">
    <citation type="submission" date="2007-11" db="EMBL/GenBank/DDBJ databases">
        <title>Complete sequence of Petroga mobilis SJ95.</title>
        <authorList>
            <consortium name="US DOE Joint Genome Institute"/>
            <person name="Copeland A."/>
            <person name="Lucas S."/>
            <person name="Lapidus A."/>
            <person name="Barry K."/>
            <person name="Glavina del Rio T."/>
            <person name="Dalin E."/>
            <person name="Tice H."/>
            <person name="Pitluck S."/>
            <person name="Meincke L."/>
            <person name="Brettin T."/>
            <person name="Bruce D."/>
            <person name="Detter J.C."/>
            <person name="Han C."/>
            <person name="Kuske C.R."/>
            <person name="Schmutz J."/>
            <person name="Larimer F."/>
            <person name="Land M."/>
            <person name="Hauser L."/>
            <person name="Kyrpides N."/>
            <person name="Mikhailova N."/>
            <person name="Noll K."/>
            <person name="Richardson P."/>
        </authorList>
    </citation>
    <scope>NUCLEOTIDE SEQUENCE [LARGE SCALE GENOMIC DNA]</scope>
    <source>
        <strain>DSM 10674 / SJ95</strain>
    </source>
</reference>
<feature type="chain" id="PRO_1000074491" description="Crossover junction endodeoxyribonuclease RuvC">
    <location>
        <begin position="1"/>
        <end position="163"/>
    </location>
</feature>
<feature type="active site" evidence="1">
    <location>
        <position position="7"/>
    </location>
</feature>
<feature type="active site" evidence="1">
    <location>
        <position position="67"/>
    </location>
</feature>
<feature type="active site" evidence="1">
    <location>
        <position position="140"/>
    </location>
</feature>
<feature type="binding site" evidence="1">
    <location>
        <position position="7"/>
    </location>
    <ligand>
        <name>Mg(2+)</name>
        <dbReference type="ChEBI" id="CHEBI:18420"/>
        <label>1</label>
    </ligand>
</feature>
<feature type="binding site" evidence="1">
    <location>
        <position position="67"/>
    </location>
    <ligand>
        <name>Mg(2+)</name>
        <dbReference type="ChEBI" id="CHEBI:18420"/>
        <label>2</label>
    </ligand>
</feature>
<feature type="binding site" evidence="1">
    <location>
        <position position="140"/>
    </location>
    <ligand>
        <name>Mg(2+)</name>
        <dbReference type="ChEBI" id="CHEBI:18420"/>
        <label>1</label>
    </ligand>
</feature>
<organism>
    <name type="scientific">Petrotoga mobilis (strain DSM 10674 / SJ95)</name>
    <dbReference type="NCBI Taxonomy" id="403833"/>
    <lineage>
        <taxon>Bacteria</taxon>
        <taxon>Thermotogati</taxon>
        <taxon>Thermotogota</taxon>
        <taxon>Thermotogae</taxon>
        <taxon>Petrotogales</taxon>
        <taxon>Petrotogaceae</taxon>
        <taxon>Petrotoga</taxon>
    </lineage>
</organism>
<gene>
    <name evidence="1" type="primary">ruvC</name>
    <name type="ordered locus">Pmob_1484</name>
</gene>
<dbReference type="EC" id="3.1.21.10" evidence="1"/>
<dbReference type="EMBL" id="CP000879">
    <property type="protein sequence ID" value="ABX32187.1"/>
    <property type="molecule type" value="Genomic_DNA"/>
</dbReference>
<dbReference type="RefSeq" id="WP_012209286.1">
    <property type="nucleotide sequence ID" value="NC_010003.1"/>
</dbReference>
<dbReference type="SMR" id="A9BIM4"/>
<dbReference type="STRING" id="403833.Pmob_1484"/>
<dbReference type="KEGG" id="pmo:Pmob_1484"/>
<dbReference type="eggNOG" id="COG0817">
    <property type="taxonomic scope" value="Bacteria"/>
</dbReference>
<dbReference type="HOGENOM" id="CLU_091257_3_1_0"/>
<dbReference type="OrthoDB" id="9805499at2"/>
<dbReference type="Proteomes" id="UP000000789">
    <property type="component" value="Chromosome"/>
</dbReference>
<dbReference type="GO" id="GO:0005737">
    <property type="term" value="C:cytoplasm"/>
    <property type="evidence" value="ECO:0007669"/>
    <property type="project" value="UniProtKB-SubCell"/>
</dbReference>
<dbReference type="GO" id="GO:0048476">
    <property type="term" value="C:Holliday junction resolvase complex"/>
    <property type="evidence" value="ECO:0007669"/>
    <property type="project" value="UniProtKB-UniRule"/>
</dbReference>
<dbReference type="GO" id="GO:0008821">
    <property type="term" value="F:crossover junction DNA endonuclease activity"/>
    <property type="evidence" value="ECO:0007669"/>
    <property type="project" value="UniProtKB-UniRule"/>
</dbReference>
<dbReference type="GO" id="GO:0003677">
    <property type="term" value="F:DNA binding"/>
    <property type="evidence" value="ECO:0007669"/>
    <property type="project" value="UniProtKB-KW"/>
</dbReference>
<dbReference type="GO" id="GO:0000287">
    <property type="term" value="F:magnesium ion binding"/>
    <property type="evidence" value="ECO:0007669"/>
    <property type="project" value="UniProtKB-UniRule"/>
</dbReference>
<dbReference type="GO" id="GO:0006310">
    <property type="term" value="P:DNA recombination"/>
    <property type="evidence" value="ECO:0007669"/>
    <property type="project" value="UniProtKB-UniRule"/>
</dbReference>
<dbReference type="GO" id="GO:0006281">
    <property type="term" value="P:DNA repair"/>
    <property type="evidence" value="ECO:0007669"/>
    <property type="project" value="UniProtKB-UniRule"/>
</dbReference>
<dbReference type="CDD" id="cd16962">
    <property type="entry name" value="RuvC"/>
    <property type="match status" value="1"/>
</dbReference>
<dbReference type="FunFam" id="3.30.420.10:FF:000002">
    <property type="entry name" value="Crossover junction endodeoxyribonuclease RuvC"/>
    <property type="match status" value="1"/>
</dbReference>
<dbReference type="Gene3D" id="3.30.420.10">
    <property type="entry name" value="Ribonuclease H-like superfamily/Ribonuclease H"/>
    <property type="match status" value="1"/>
</dbReference>
<dbReference type="HAMAP" id="MF_00034">
    <property type="entry name" value="RuvC"/>
    <property type="match status" value="1"/>
</dbReference>
<dbReference type="InterPro" id="IPR012337">
    <property type="entry name" value="RNaseH-like_sf"/>
</dbReference>
<dbReference type="InterPro" id="IPR036397">
    <property type="entry name" value="RNaseH_sf"/>
</dbReference>
<dbReference type="InterPro" id="IPR002176">
    <property type="entry name" value="X-over_junc_endoDNase_RuvC"/>
</dbReference>
<dbReference type="NCBIfam" id="NF000711">
    <property type="entry name" value="PRK00039.2-1"/>
    <property type="match status" value="1"/>
</dbReference>
<dbReference type="NCBIfam" id="TIGR00228">
    <property type="entry name" value="ruvC"/>
    <property type="match status" value="1"/>
</dbReference>
<dbReference type="PANTHER" id="PTHR30194">
    <property type="entry name" value="CROSSOVER JUNCTION ENDODEOXYRIBONUCLEASE RUVC"/>
    <property type="match status" value="1"/>
</dbReference>
<dbReference type="PANTHER" id="PTHR30194:SF3">
    <property type="entry name" value="CROSSOVER JUNCTION ENDODEOXYRIBONUCLEASE RUVC"/>
    <property type="match status" value="1"/>
</dbReference>
<dbReference type="Pfam" id="PF02075">
    <property type="entry name" value="RuvC"/>
    <property type="match status" value="1"/>
</dbReference>
<dbReference type="PRINTS" id="PR00696">
    <property type="entry name" value="RSOLVASERUVC"/>
</dbReference>
<dbReference type="SUPFAM" id="SSF53098">
    <property type="entry name" value="Ribonuclease H-like"/>
    <property type="match status" value="1"/>
</dbReference>
<protein>
    <recommendedName>
        <fullName evidence="1">Crossover junction endodeoxyribonuclease RuvC</fullName>
        <ecNumber evidence="1">3.1.21.10</ecNumber>
    </recommendedName>
    <alternativeName>
        <fullName evidence="1">Holliday junction nuclease RuvC</fullName>
    </alternativeName>
    <alternativeName>
        <fullName evidence="1">Holliday junction resolvase RuvC</fullName>
    </alternativeName>
</protein>
<evidence type="ECO:0000255" key="1">
    <source>
        <dbReference type="HAMAP-Rule" id="MF_00034"/>
    </source>
</evidence>
<name>RUVC_PETMO</name>
<proteinExistence type="inferred from homology"/>
<comment type="function">
    <text evidence="1">The RuvA-RuvB-RuvC complex processes Holliday junction (HJ) DNA during genetic recombination and DNA repair. Endonuclease that resolves HJ intermediates. Cleaves cruciform DNA by making single-stranded nicks across the HJ at symmetrical positions within the homologous arms, yielding a 5'-phosphate and a 3'-hydroxyl group; requires a central core of homology in the junction. The consensus cleavage sequence is 5'-(A/T)TT(C/G)-3'. Cleavage occurs on the 3'-side of the TT dinucleotide at the point of strand exchange. HJ branch migration catalyzed by RuvA-RuvB allows RuvC to scan DNA until it finds its consensus sequence, where it cleaves and resolves the cruciform DNA.</text>
</comment>
<comment type="catalytic activity">
    <reaction evidence="1">
        <text>Endonucleolytic cleavage at a junction such as a reciprocal single-stranded crossover between two homologous DNA duplexes (Holliday junction).</text>
        <dbReference type="EC" id="3.1.21.10"/>
    </reaction>
</comment>
<comment type="cofactor">
    <cofactor evidence="1">
        <name>Mg(2+)</name>
        <dbReference type="ChEBI" id="CHEBI:18420"/>
    </cofactor>
    <text evidence="1">Binds 2 Mg(2+) ion per subunit.</text>
</comment>
<comment type="subunit">
    <text evidence="1">Homodimer which binds Holliday junction (HJ) DNA. The HJ becomes 2-fold symmetrical on binding to RuvC with unstacked arms; it has a different conformation from HJ DNA in complex with RuvA. In the full resolvosome a probable DNA-RuvA(4)-RuvB(12)-RuvC(2) complex forms which resolves the HJ.</text>
</comment>
<comment type="subcellular location">
    <subcellularLocation>
        <location evidence="1">Cytoplasm</location>
    </subcellularLocation>
</comment>
<comment type="similarity">
    <text evidence="1">Belongs to the RuvC family.</text>
</comment>